<keyword id="KW-0963">Cytoplasm</keyword>
<keyword id="KW-1015">Disulfide bond</keyword>
<keyword id="KW-0274">FAD</keyword>
<keyword id="KW-0285">Flavoprotein</keyword>
<keyword id="KW-0520">NAD</keyword>
<keyword id="KW-0560">Oxidoreductase</keyword>
<keyword id="KW-0676">Redox-active center</keyword>
<proteinExistence type="evidence at transcript level"/>
<feature type="chain" id="PRO_0000068007" description="Dihydrolipoyl dehydrogenase">
    <location>
        <begin position="1"/>
        <end position="497"/>
    </location>
</feature>
<feature type="active site" description="Proton acceptor" evidence="1">
    <location>
        <position position="475"/>
    </location>
</feature>
<feature type="binding site" evidence="1">
    <location>
        <begin position="60"/>
        <end position="69"/>
    </location>
    <ligand>
        <name>FAD</name>
        <dbReference type="ChEBI" id="CHEBI:57692"/>
    </ligand>
</feature>
<feature type="binding site" evidence="1">
    <location>
        <position position="78"/>
    </location>
    <ligand>
        <name>FAD</name>
        <dbReference type="ChEBI" id="CHEBI:57692"/>
    </ligand>
</feature>
<feature type="binding site" evidence="1">
    <location>
        <position position="142"/>
    </location>
    <ligand>
        <name>FAD</name>
        <dbReference type="ChEBI" id="CHEBI:57692"/>
    </ligand>
</feature>
<feature type="binding site" evidence="1">
    <location>
        <begin position="170"/>
        <end position="172"/>
    </location>
    <ligand>
        <name>FAD</name>
        <dbReference type="ChEBI" id="CHEBI:57692"/>
    </ligand>
</feature>
<feature type="binding site" evidence="1">
    <location>
        <begin position="207"/>
        <end position="214"/>
    </location>
    <ligand>
        <name>NAD(+)</name>
        <dbReference type="ChEBI" id="CHEBI:57540"/>
    </ligand>
</feature>
<feature type="binding site" evidence="1">
    <location>
        <position position="230"/>
    </location>
    <ligand>
        <name>NAD(+)</name>
        <dbReference type="ChEBI" id="CHEBI:57540"/>
    </ligand>
</feature>
<feature type="binding site" evidence="1">
    <location>
        <position position="264"/>
    </location>
    <ligand>
        <name>NAD(+)</name>
        <dbReference type="ChEBI" id="CHEBI:57540"/>
    </ligand>
</feature>
<feature type="binding site" evidence="1">
    <location>
        <position position="302"/>
    </location>
    <ligand>
        <name>NAD(+)</name>
        <dbReference type="ChEBI" id="CHEBI:57540"/>
    </ligand>
</feature>
<feature type="binding site" evidence="1">
    <location>
        <position position="343"/>
    </location>
    <ligand>
        <name>FAD</name>
        <dbReference type="ChEBI" id="CHEBI:57692"/>
    </ligand>
</feature>
<feature type="binding site" evidence="1">
    <location>
        <begin position="349"/>
        <end position="352"/>
    </location>
    <ligand>
        <name>FAD</name>
        <dbReference type="ChEBI" id="CHEBI:57692"/>
    </ligand>
</feature>
<feature type="disulfide bond" description="Redox-active" evidence="1">
    <location>
        <begin position="69"/>
        <end position="74"/>
    </location>
</feature>
<accession>O18480</accession>
<dbReference type="EC" id="1.8.1.4"/>
<dbReference type="EMBL" id="AF008586">
    <property type="protein sequence ID" value="AAB88282.1"/>
    <property type="molecule type" value="mRNA"/>
</dbReference>
<dbReference type="SMR" id="O18480"/>
<dbReference type="OrthoDB" id="361797at2759"/>
<dbReference type="GO" id="GO:0005739">
    <property type="term" value="C:mitochondrion"/>
    <property type="evidence" value="ECO:0007669"/>
    <property type="project" value="TreeGrafter"/>
</dbReference>
<dbReference type="GO" id="GO:0045252">
    <property type="term" value="C:oxoglutarate dehydrogenase complex"/>
    <property type="evidence" value="ECO:0007669"/>
    <property type="project" value="TreeGrafter"/>
</dbReference>
<dbReference type="GO" id="GO:0004148">
    <property type="term" value="F:dihydrolipoyl dehydrogenase (NADH) activity"/>
    <property type="evidence" value="ECO:0007669"/>
    <property type="project" value="UniProtKB-EC"/>
</dbReference>
<dbReference type="GO" id="GO:0050660">
    <property type="term" value="F:flavin adenine dinucleotide binding"/>
    <property type="evidence" value="ECO:0007669"/>
    <property type="project" value="InterPro"/>
</dbReference>
<dbReference type="GO" id="GO:0006103">
    <property type="term" value="P:2-oxoglutarate metabolic process"/>
    <property type="evidence" value="ECO:0007669"/>
    <property type="project" value="TreeGrafter"/>
</dbReference>
<dbReference type="FunFam" id="3.30.390.30:FF:000001">
    <property type="entry name" value="Dihydrolipoyl dehydrogenase"/>
    <property type="match status" value="1"/>
</dbReference>
<dbReference type="FunFam" id="3.50.50.60:FF:000001">
    <property type="entry name" value="Dihydrolipoyl dehydrogenase, mitochondrial"/>
    <property type="match status" value="1"/>
</dbReference>
<dbReference type="Gene3D" id="3.30.390.30">
    <property type="match status" value="1"/>
</dbReference>
<dbReference type="Gene3D" id="3.50.50.60">
    <property type="entry name" value="FAD/NAD(P)-binding domain"/>
    <property type="match status" value="2"/>
</dbReference>
<dbReference type="InterPro" id="IPR050151">
    <property type="entry name" value="Class-I_Pyr_Nuc-Dis_Oxidored"/>
</dbReference>
<dbReference type="InterPro" id="IPR036188">
    <property type="entry name" value="FAD/NAD-bd_sf"/>
</dbReference>
<dbReference type="InterPro" id="IPR023753">
    <property type="entry name" value="FAD/NAD-binding_dom"/>
</dbReference>
<dbReference type="InterPro" id="IPR016156">
    <property type="entry name" value="FAD/NAD-linked_Rdtase_dimer_sf"/>
</dbReference>
<dbReference type="InterPro" id="IPR006258">
    <property type="entry name" value="Lipoamide_DH"/>
</dbReference>
<dbReference type="InterPro" id="IPR001100">
    <property type="entry name" value="Pyr_nuc-diS_OxRdtase"/>
</dbReference>
<dbReference type="InterPro" id="IPR004099">
    <property type="entry name" value="Pyr_nucl-diS_OxRdtase_dimer"/>
</dbReference>
<dbReference type="InterPro" id="IPR012999">
    <property type="entry name" value="Pyr_OxRdtase_I_AS"/>
</dbReference>
<dbReference type="NCBIfam" id="TIGR01350">
    <property type="entry name" value="lipoamide_DH"/>
    <property type="match status" value="1"/>
</dbReference>
<dbReference type="PANTHER" id="PTHR22912:SF151">
    <property type="entry name" value="DIHYDROLIPOYL DEHYDROGENASE, MITOCHONDRIAL"/>
    <property type="match status" value="1"/>
</dbReference>
<dbReference type="PANTHER" id="PTHR22912">
    <property type="entry name" value="DISULFIDE OXIDOREDUCTASE"/>
    <property type="match status" value="1"/>
</dbReference>
<dbReference type="Pfam" id="PF07992">
    <property type="entry name" value="Pyr_redox_2"/>
    <property type="match status" value="1"/>
</dbReference>
<dbReference type="Pfam" id="PF02852">
    <property type="entry name" value="Pyr_redox_dim"/>
    <property type="match status" value="1"/>
</dbReference>
<dbReference type="PIRSF" id="PIRSF000350">
    <property type="entry name" value="Mercury_reductase_MerA"/>
    <property type="match status" value="1"/>
</dbReference>
<dbReference type="PRINTS" id="PR00368">
    <property type="entry name" value="FADPNR"/>
</dbReference>
<dbReference type="PRINTS" id="PR00411">
    <property type="entry name" value="PNDRDTASEI"/>
</dbReference>
<dbReference type="SUPFAM" id="SSF51905">
    <property type="entry name" value="FAD/NAD(P)-binding domain"/>
    <property type="match status" value="1"/>
</dbReference>
<dbReference type="SUPFAM" id="SSF55424">
    <property type="entry name" value="FAD/NAD-linked reductases, dimerisation (C-terminal) domain"/>
    <property type="match status" value="1"/>
</dbReference>
<dbReference type="PROSITE" id="PS00076">
    <property type="entry name" value="PYRIDINE_REDOX_1"/>
    <property type="match status" value="1"/>
</dbReference>
<organism>
    <name type="scientific">Manduca sexta</name>
    <name type="common">Tobacco hawkmoth</name>
    <name type="synonym">Tobacco hornworm</name>
    <dbReference type="NCBI Taxonomy" id="7130"/>
    <lineage>
        <taxon>Eukaryota</taxon>
        <taxon>Metazoa</taxon>
        <taxon>Ecdysozoa</taxon>
        <taxon>Arthropoda</taxon>
        <taxon>Hexapoda</taxon>
        <taxon>Insecta</taxon>
        <taxon>Pterygota</taxon>
        <taxon>Neoptera</taxon>
        <taxon>Endopterygota</taxon>
        <taxon>Lepidoptera</taxon>
        <taxon>Glossata</taxon>
        <taxon>Ditrysia</taxon>
        <taxon>Bombycoidea</taxon>
        <taxon>Sphingidae</taxon>
        <taxon>Sphinginae</taxon>
        <taxon>Sphingini</taxon>
        <taxon>Manduca</taxon>
    </lineage>
</organism>
<evidence type="ECO:0000250" key="1"/>
<evidence type="ECO:0000305" key="2"/>
<comment type="catalytic activity">
    <reaction>
        <text>N(6)-[(R)-dihydrolipoyl]-L-lysyl-[protein] + NAD(+) = N(6)-[(R)-lipoyl]-L-lysyl-[protein] + NADH + H(+)</text>
        <dbReference type="Rhea" id="RHEA:15045"/>
        <dbReference type="Rhea" id="RHEA-COMP:10474"/>
        <dbReference type="Rhea" id="RHEA-COMP:10475"/>
        <dbReference type="ChEBI" id="CHEBI:15378"/>
        <dbReference type="ChEBI" id="CHEBI:57540"/>
        <dbReference type="ChEBI" id="CHEBI:57945"/>
        <dbReference type="ChEBI" id="CHEBI:83099"/>
        <dbReference type="ChEBI" id="CHEBI:83100"/>
        <dbReference type="EC" id="1.8.1.4"/>
    </reaction>
</comment>
<comment type="cofactor">
    <cofactor evidence="1">
        <name>FAD</name>
        <dbReference type="ChEBI" id="CHEBI:57692"/>
    </cofactor>
    <text evidence="1">Binds 1 FAD per subunit.</text>
</comment>
<comment type="subunit">
    <text evidence="1">Homodimer.</text>
</comment>
<comment type="subcellular location">
    <subcellularLocation>
        <location evidence="2">Cytoplasm</location>
    </subcellularLocation>
</comment>
<comment type="miscellaneous">
    <text>The active site is a redox-active disulfide bond.</text>
</comment>
<comment type="similarity">
    <text evidence="2">Belongs to the class-I pyridine nucleotide-disulfide oxidoreductase family.</text>
</comment>
<reference key="1">
    <citation type="journal article" date="1997" name="Gene">
        <title>Primary structure of an invertebrate dihydrolipoamide dehydrogenase with phylogenetic relationship to vertebrate and bacterial disulfide oxidoreductases.</title>
        <authorList>
            <person name="Pullikuth A.K."/>
            <person name="Gill S.S."/>
        </authorList>
    </citation>
    <scope>NUCLEOTIDE SEQUENCE [MRNA]</scope>
</reference>
<name>DLDH_MANSE</name>
<protein>
    <recommendedName>
        <fullName>Dihydrolipoyl dehydrogenase</fullName>
        <ecNumber>1.8.1.4</ecNumber>
    </recommendedName>
    <alternativeName>
        <fullName>Dihydrolipoamide dehydrogenase</fullName>
    </alternativeName>
    <alternativeName>
        <fullName>E3</fullName>
    </alternativeName>
</protein>
<sequence>MGYKFLKLASASFRNGGVRIVSRQYSTTHDADLVVIGAGPGGYVAAIKAAQLGMKVVSVEKEPSLGGTCLNVGCIPSKALLHNTHLYHMAKHDFKHRGIETGEVKFNFKAMMDYKVNAVKALTGGIAMLFQKNKVKLVRGAGTIVAPNKVEVKGEKGVETVNTKNILIATGSEVTPFPGVTFDEKQIITSTGALSLESVPKKMLVIGAGVIGLELGSVYQRLGADVTAIEFLGSIGGIGIDMEVSKDYRILAKQGMKFKLETKVLGVKKEGSTVKVEDVSIEGAKGGNKETMDCDVVLISIGRRPYTKDLGLDKVGIALDDRGRVPVNNKFQTTVPGIYAIGDVIHGPMLAHKAEDEGIVCVEGIKGMPVHFNYDAIPSVIYTSPEVGWVRKTEEDLKKEGKAYKVRKFPFLANSRAKTNGEPDGFVKVLSDKATDVILGTHIIGPGGGELINEAVLAQEYGAAAEDVARVCHAHPTCAEALREANLAAYCGKPINF</sequence>